<sequence>MPRIVNPLDEMLFKEVLKEQQRIRVYTERARYGKIKTIIEGIDEKEFDLEEIAKKLKAKLACGGTAKNGRIELQGDHRDRIKKLLAELGFSEDLIEVE</sequence>
<dbReference type="EMBL" id="AJ248284">
    <property type="protein sequence ID" value="CAB49256.1"/>
    <property type="status" value="ALT_INIT"/>
    <property type="molecule type" value="Genomic_DNA"/>
</dbReference>
<dbReference type="EMBL" id="HE613800">
    <property type="protein sequence ID" value="CCE69711.1"/>
    <property type="molecule type" value="Genomic_DNA"/>
</dbReference>
<dbReference type="PIR" id="A75147">
    <property type="entry name" value="A75147"/>
</dbReference>
<dbReference type="SMR" id="Q9V1U3"/>
<dbReference type="STRING" id="272844.PAB7082"/>
<dbReference type="KEGG" id="pab:PAB7082"/>
<dbReference type="PATRIC" id="fig|272844.11.peg.355"/>
<dbReference type="eggNOG" id="arCOG04223">
    <property type="taxonomic scope" value="Archaea"/>
</dbReference>
<dbReference type="HOGENOM" id="CLU_082805_6_1_2"/>
<dbReference type="Proteomes" id="UP000000810">
    <property type="component" value="Chromosome"/>
</dbReference>
<dbReference type="Proteomes" id="UP000009139">
    <property type="component" value="Chromosome"/>
</dbReference>
<dbReference type="GO" id="GO:0003729">
    <property type="term" value="F:mRNA binding"/>
    <property type="evidence" value="ECO:0007669"/>
    <property type="project" value="TreeGrafter"/>
</dbReference>
<dbReference type="GO" id="GO:0003743">
    <property type="term" value="F:translation initiation factor activity"/>
    <property type="evidence" value="ECO:0007669"/>
    <property type="project" value="InterPro"/>
</dbReference>
<dbReference type="GO" id="GO:0001731">
    <property type="term" value="P:formation of translation preinitiation complex"/>
    <property type="evidence" value="ECO:0007669"/>
    <property type="project" value="TreeGrafter"/>
</dbReference>
<dbReference type="GO" id="GO:0006417">
    <property type="term" value="P:regulation of translation"/>
    <property type="evidence" value="ECO:0007669"/>
    <property type="project" value="UniProtKB-UniRule"/>
</dbReference>
<dbReference type="GO" id="GO:0002188">
    <property type="term" value="P:translation reinitiation"/>
    <property type="evidence" value="ECO:0007669"/>
    <property type="project" value="TreeGrafter"/>
</dbReference>
<dbReference type="CDD" id="cd11567">
    <property type="entry name" value="YciH_like"/>
    <property type="match status" value="1"/>
</dbReference>
<dbReference type="FunFam" id="3.30.780.10:FF:000006">
    <property type="entry name" value="Protein translation factor SUI1 homolog"/>
    <property type="match status" value="1"/>
</dbReference>
<dbReference type="Gene3D" id="3.30.780.10">
    <property type="entry name" value="SUI1-like domain"/>
    <property type="match status" value="1"/>
</dbReference>
<dbReference type="HAMAP" id="MF_00604">
    <property type="entry name" value="SUI1"/>
    <property type="match status" value="1"/>
</dbReference>
<dbReference type="InterPro" id="IPR050318">
    <property type="entry name" value="DENR/SUI1_TIF"/>
</dbReference>
<dbReference type="InterPro" id="IPR001950">
    <property type="entry name" value="SUI1"/>
</dbReference>
<dbReference type="InterPro" id="IPR022851">
    <property type="entry name" value="SUI1_arc"/>
</dbReference>
<dbReference type="InterPro" id="IPR005872">
    <property type="entry name" value="SUI1_arc_bac"/>
</dbReference>
<dbReference type="InterPro" id="IPR036877">
    <property type="entry name" value="SUI1_dom_sf"/>
</dbReference>
<dbReference type="NCBIfam" id="NF002096">
    <property type="entry name" value="PRK00939.1"/>
    <property type="match status" value="1"/>
</dbReference>
<dbReference type="NCBIfam" id="TIGR01158">
    <property type="entry name" value="SUI1_rel"/>
    <property type="match status" value="1"/>
</dbReference>
<dbReference type="PANTHER" id="PTHR12789:SF0">
    <property type="entry name" value="DENSITY-REGULATED PROTEIN"/>
    <property type="match status" value="1"/>
</dbReference>
<dbReference type="PANTHER" id="PTHR12789">
    <property type="entry name" value="DENSITY-REGULATED PROTEIN HOMOLOG"/>
    <property type="match status" value="1"/>
</dbReference>
<dbReference type="Pfam" id="PF01253">
    <property type="entry name" value="SUI1"/>
    <property type="match status" value="1"/>
</dbReference>
<dbReference type="PIRSF" id="PIRSF037511">
    <property type="entry name" value="Transl_init_SUI1_pro"/>
    <property type="match status" value="1"/>
</dbReference>
<dbReference type="SUPFAM" id="SSF55159">
    <property type="entry name" value="eIF1-like"/>
    <property type="match status" value="1"/>
</dbReference>
<dbReference type="PROSITE" id="PS50296">
    <property type="entry name" value="SUI1"/>
    <property type="match status" value="1"/>
</dbReference>
<protein>
    <recommendedName>
        <fullName evidence="1">Protein translation factor SUI1 homolog</fullName>
    </recommendedName>
</protein>
<accession>Q9V1U3</accession>
<accession>G8ZHW8</accession>
<proteinExistence type="inferred from homology"/>
<name>SUI1_PYRAB</name>
<feature type="chain" id="PRO_0000130587" description="Protein translation factor SUI1 homolog">
    <location>
        <begin position="1"/>
        <end position="98"/>
    </location>
</feature>
<reference key="1">
    <citation type="journal article" date="2003" name="Mol. Microbiol.">
        <title>An integrated analysis of the genome of the hyperthermophilic archaeon Pyrococcus abyssi.</title>
        <authorList>
            <person name="Cohen G.N."/>
            <person name="Barbe V."/>
            <person name="Flament D."/>
            <person name="Galperin M."/>
            <person name="Heilig R."/>
            <person name="Lecompte O."/>
            <person name="Poch O."/>
            <person name="Prieur D."/>
            <person name="Querellou J."/>
            <person name="Ripp R."/>
            <person name="Thierry J.-C."/>
            <person name="Van der Oost J."/>
            <person name="Weissenbach J."/>
            <person name="Zivanovic Y."/>
            <person name="Forterre P."/>
        </authorList>
    </citation>
    <scope>NUCLEOTIDE SEQUENCE [LARGE SCALE GENOMIC DNA]</scope>
    <source>
        <strain>GE5 / Orsay</strain>
    </source>
</reference>
<reference key="2">
    <citation type="journal article" date="2012" name="Curr. Microbiol.">
        <title>Re-annotation of two hyperthermophilic archaea Pyrococcus abyssi GE5 and Pyrococcus furiosus DSM 3638.</title>
        <authorList>
            <person name="Gao J."/>
            <person name="Wang J."/>
        </authorList>
    </citation>
    <scope>GENOME REANNOTATION</scope>
    <source>
        <strain>GE5 / Orsay</strain>
    </source>
</reference>
<gene>
    <name type="ordered locus">PYRAB03340</name>
    <name type="ORF">PAB7082</name>
</gene>
<keyword id="KW-0648">Protein biosynthesis</keyword>
<keyword id="KW-0810">Translation regulation</keyword>
<comment type="similarity">
    <text evidence="1">Belongs to the SUI1 family.</text>
</comment>
<comment type="sequence caution" evidence="2">
    <conflict type="erroneous initiation">
        <sequence resource="EMBL-CDS" id="CAB49256"/>
    </conflict>
    <text>Extended N-terminus.</text>
</comment>
<organism>
    <name type="scientific">Pyrococcus abyssi (strain GE5 / Orsay)</name>
    <dbReference type="NCBI Taxonomy" id="272844"/>
    <lineage>
        <taxon>Archaea</taxon>
        <taxon>Methanobacteriati</taxon>
        <taxon>Methanobacteriota</taxon>
        <taxon>Thermococci</taxon>
        <taxon>Thermococcales</taxon>
        <taxon>Thermococcaceae</taxon>
        <taxon>Pyrococcus</taxon>
    </lineage>
</organism>
<evidence type="ECO:0000255" key="1">
    <source>
        <dbReference type="HAMAP-Rule" id="MF_00604"/>
    </source>
</evidence>
<evidence type="ECO:0000305" key="2"/>